<accession>B1IAU9</accession>
<gene>
    <name evidence="1" type="primary">rpsP</name>
    <name type="ordered locus">SPH_0873</name>
</gene>
<name>RS16_STRPI</name>
<reference key="1">
    <citation type="journal article" date="2010" name="Genome Biol.">
        <title>Structure and dynamics of the pan-genome of Streptococcus pneumoniae and closely related species.</title>
        <authorList>
            <person name="Donati C."/>
            <person name="Hiller N.L."/>
            <person name="Tettelin H."/>
            <person name="Muzzi A."/>
            <person name="Croucher N.J."/>
            <person name="Angiuoli S.V."/>
            <person name="Oggioni M."/>
            <person name="Dunning Hotopp J.C."/>
            <person name="Hu F.Z."/>
            <person name="Riley D.R."/>
            <person name="Covacci A."/>
            <person name="Mitchell T.J."/>
            <person name="Bentley S.D."/>
            <person name="Kilian M."/>
            <person name="Ehrlich G.D."/>
            <person name="Rappuoli R."/>
            <person name="Moxon E.R."/>
            <person name="Masignani V."/>
        </authorList>
    </citation>
    <scope>NUCLEOTIDE SEQUENCE [LARGE SCALE GENOMIC DNA]</scope>
    <source>
        <strain>Hungary19A-6</strain>
    </source>
</reference>
<evidence type="ECO:0000255" key="1">
    <source>
        <dbReference type="HAMAP-Rule" id="MF_00385"/>
    </source>
</evidence>
<evidence type="ECO:0000305" key="2"/>
<keyword id="KW-0687">Ribonucleoprotein</keyword>
<keyword id="KW-0689">Ribosomal protein</keyword>
<comment type="similarity">
    <text evidence="1">Belongs to the bacterial ribosomal protein bS16 family.</text>
</comment>
<feature type="chain" id="PRO_1000196478" description="Small ribosomal subunit protein bS16">
    <location>
        <begin position="1"/>
        <end position="90"/>
    </location>
</feature>
<proteinExistence type="inferred from homology"/>
<organism>
    <name type="scientific">Streptococcus pneumoniae (strain Hungary19A-6)</name>
    <dbReference type="NCBI Taxonomy" id="487214"/>
    <lineage>
        <taxon>Bacteria</taxon>
        <taxon>Bacillati</taxon>
        <taxon>Bacillota</taxon>
        <taxon>Bacilli</taxon>
        <taxon>Lactobacillales</taxon>
        <taxon>Streptococcaceae</taxon>
        <taxon>Streptococcus</taxon>
    </lineage>
</organism>
<protein>
    <recommendedName>
        <fullName evidence="1">Small ribosomal subunit protein bS16</fullName>
    </recommendedName>
    <alternativeName>
        <fullName evidence="2">30S ribosomal protein S16</fullName>
    </alternativeName>
</protein>
<sequence length="90" mass="10222">MAVKIRLTRMGSKKKPFYRINVADSRSPRDGRFIETVGTYNPLVAENQVTLKEDRVLAWLANGAQPSDTVRNILSKEGVLKKFHDSKFSK</sequence>
<dbReference type="EMBL" id="CP000936">
    <property type="protein sequence ID" value="ACA35735.1"/>
    <property type="molecule type" value="Genomic_DNA"/>
</dbReference>
<dbReference type="RefSeq" id="WP_000268761.1">
    <property type="nucleotide sequence ID" value="NC_010380.1"/>
</dbReference>
<dbReference type="SMR" id="B1IAU9"/>
<dbReference type="GeneID" id="45653854"/>
<dbReference type="KEGG" id="spv:SPH_0873"/>
<dbReference type="HOGENOM" id="CLU_100590_5_0_9"/>
<dbReference type="Proteomes" id="UP000002163">
    <property type="component" value="Chromosome"/>
</dbReference>
<dbReference type="GO" id="GO:0005737">
    <property type="term" value="C:cytoplasm"/>
    <property type="evidence" value="ECO:0007669"/>
    <property type="project" value="UniProtKB-ARBA"/>
</dbReference>
<dbReference type="GO" id="GO:0015935">
    <property type="term" value="C:small ribosomal subunit"/>
    <property type="evidence" value="ECO:0007669"/>
    <property type="project" value="TreeGrafter"/>
</dbReference>
<dbReference type="GO" id="GO:0003735">
    <property type="term" value="F:structural constituent of ribosome"/>
    <property type="evidence" value="ECO:0007669"/>
    <property type="project" value="InterPro"/>
</dbReference>
<dbReference type="GO" id="GO:0006412">
    <property type="term" value="P:translation"/>
    <property type="evidence" value="ECO:0007669"/>
    <property type="project" value="UniProtKB-UniRule"/>
</dbReference>
<dbReference type="FunFam" id="3.30.1320.10:FF:000002">
    <property type="entry name" value="30S ribosomal protein S16"/>
    <property type="match status" value="1"/>
</dbReference>
<dbReference type="Gene3D" id="3.30.1320.10">
    <property type="match status" value="1"/>
</dbReference>
<dbReference type="HAMAP" id="MF_00385">
    <property type="entry name" value="Ribosomal_bS16"/>
    <property type="match status" value="1"/>
</dbReference>
<dbReference type="InterPro" id="IPR000307">
    <property type="entry name" value="Ribosomal_bS16"/>
</dbReference>
<dbReference type="InterPro" id="IPR023803">
    <property type="entry name" value="Ribosomal_bS16_dom_sf"/>
</dbReference>
<dbReference type="NCBIfam" id="TIGR00002">
    <property type="entry name" value="S16"/>
    <property type="match status" value="1"/>
</dbReference>
<dbReference type="PANTHER" id="PTHR12919">
    <property type="entry name" value="30S RIBOSOMAL PROTEIN S16"/>
    <property type="match status" value="1"/>
</dbReference>
<dbReference type="PANTHER" id="PTHR12919:SF20">
    <property type="entry name" value="SMALL RIBOSOMAL SUBUNIT PROTEIN BS16M"/>
    <property type="match status" value="1"/>
</dbReference>
<dbReference type="Pfam" id="PF00886">
    <property type="entry name" value="Ribosomal_S16"/>
    <property type="match status" value="1"/>
</dbReference>
<dbReference type="SUPFAM" id="SSF54565">
    <property type="entry name" value="Ribosomal protein S16"/>
    <property type="match status" value="1"/>
</dbReference>